<evidence type="ECO:0000255" key="1">
    <source>
        <dbReference type="HAMAP-Rule" id="MF_00252"/>
    </source>
</evidence>
<name>SYK_PHOLL</name>
<organism>
    <name type="scientific">Photorhabdus laumondii subsp. laumondii (strain DSM 15139 / CIP 105565 / TT01)</name>
    <name type="common">Photorhabdus luminescens subsp. laumondii</name>
    <dbReference type="NCBI Taxonomy" id="243265"/>
    <lineage>
        <taxon>Bacteria</taxon>
        <taxon>Pseudomonadati</taxon>
        <taxon>Pseudomonadota</taxon>
        <taxon>Gammaproteobacteria</taxon>
        <taxon>Enterobacterales</taxon>
        <taxon>Morganellaceae</taxon>
        <taxon>Photorhabdus</taxon>
    </lineage>
</organism>
<sequence>MSQQQQGAEQAPDLNNELQTRREKLAALRENGIAFPNDFRRENISEDLHAKYDDKTQEELEALNIDVTVGGRMMTRRIMGKASFVTLQDMGGRIQLYVARDDLPEGIYNEQFKKWDLGDILGARGKLFKTKTGELSIHCTELRLLTKALRPLPDKFHGLADQETRYRQRYLDLIANEESRKTFQIRSQVLLALRSFMVSKGFMEVETPMMQVIPGGAAARPFITHHNALDIDMYLRIAPELYLKRLVVGGFERVFEINRNFRNEGVSPRHNPEFTMMELYMAYADYKDLIVLIEELFRTLTQNILGNTLVKYGEQEFDFGKPFAQMTMKEAICKYRPETNIADLDDMDKVVAIAESLGIEVEKGWGLGRVQCEIFEETAESHLIQPTFITEYPAEVSPLARRNDANPFITDRFEFFIGGREIGNGFSELNDAEDQAERFAEQVRQKDEGDDEAMFYDEDYVTALEHGMPPTAGLGIGIDRMIMLLTDSHTIRDVILFPAMRPQK</sequence>
<accession>Q7N1C8</accession>
<dbReference type="EC" id="6.1.1.6" evidence="1"/>
<dbReference type="EMBL" id="BX571871">
    <property type="protein sequence ID" value="CAE15921.1"/>
    <property type="molecule type" value="Genomic_DNA"/>
</dbReference>
<dbReference type="RefSeq" id="WP_011147728.1">
    <property type="nucleotide sequence ID" value="NC_005126.1"/>
</dbReference>
<dbReference type="SMR" id="Q7N1C8"/>
<dbReference type="STRING" id="243265.plu3548"/>
<dbReference type="GeneID" id="48849790"/>
<dbReference type="KEGG" id="plu:plu3548"/>
<dbReference type="eggNOG" id="COG1190">
    <property type="taxonomic scope" value="Bacteria"/>
</dbReference>
<dbReference type="HOGENOM" id="CLU_008255_6_0_6"/>
<dbReference type="OrthoDB" id="9802326at2"/>
<dbReference type="Proteomes" id="UP000002514">
    <property type="component" value="Chromosome"/>
</dbReference>
<dbReference type="GO" id="GO:0005829">
    <property type="term" value="C:cytosol"/>
    <property type="evidence" value="ECO:0007669"/>
    <property type="project" value="TreeGrafter"/>
</dbReference>
<dbReference type="GO" id="GO:0005524">
    <property type="term" value="F:ATP binding"/>
    <property type="evidence" value="ECO:0007669"/>
    <property type="project" value="UniProtKB-UniRule"/>
</dbReference>
<dbReference type="GO" id="GO:0004824">
    <property type="term" value="F:lysine-tRNA ligase activity"/>
    <property type="evidence" value="ECO:0007669"/>
    <property type="project" value="UniProtKB-UniRule"/>
</dbReference>
<dbReference type="GO" id="GO:0000287">
    <property type="term" value="F:magnesium ion binding"/>
    <property type="evidence" value="ECO:0007669"/>
    <property type="project" value="UniProtKB-UniRule"/>
</dbReference>
<dbReference type="GO" id="GO:0000049">
    <property type="term" value="F:tRNA binding"/>
    <property type="evidence" value="ECO:0007669"/>
    <property type="project" value="TreeGrafter"/>
</dbReference>
<dbReference type="GO" id="GO:0006430">
    <property type="term" value="P:lysyl-tRNA aminoacylation"/>
    <property type="evidence" value="ECO:0007669"/>
    <property type="project" value="UniProtKB-UniRule"/>
</dbReference>
<dbReference type="CDD" id="cd00775">
    <property type="entry name" value="LysRS_core"/>
    <property type="match status" value="1"/>
</dbReference>
<dbReference type="CDD" id="cd04322">
    <property type="entry name" value="LysRS_N"/>
    <property type="match status" value="1"/>
</dbReference>
<dbReference type="FunFam" id="2.40.50.140:FF:000024">
    <property type="entry name" value="Lysine--tRNA ligase"/>
    <property type="match status" value="1"/>
</dbReference>
<dbReference type="FunFam" id="3.30.930.10:FF:000001">
    <property type="entry name" value="Lysine--tRNA ligase"/>
    <property type="match status" value="1"/>
</dbReference>
<dbReference type="Gene3D" id="3.30.930.10">
    <property type="entry name" value="Bira Bifunctional Protein, Domain 2"/>
    <property type="match status" value="1"/>
</dbReference>
<dbReference type="Gene3D" id="2.40.50.140">
    <property type="entry name" value="Nucleic acid-binding proteins"/>
    <property type="match status" value="1"/>
</dbReference>
<dbReference type="HAMAP" id="MF_00252">
    <property type="entry name" value="Lys_tRNA_synth_class2"/>
    <property type="match status" value="1"/>
</dbReference>
<dbReference type="InterPro" id="IPR004364">
    <property type="entry name" value="Aa-tRNA-synt_II"/>
</dbReference>
<dbReference type="InterPro" id="IPR006195">
    <property type="entry name" value="aa-tRNA-synth_II"/>
</dbReference>
<dbReference type="InterPro" id="IPR045864">
    <property type="entry name" value="aa-tRNA-synth_II/BPL/LPL"/>
</dbReference>
<dbReference type="InterPro" id="IPR002313">
    <property type="entry name" value="Lys-tRNA-ligase_II"/>
</dbReference>
<dbReference type="InterPro" id="IPR034762">
    <property type="entry name" value="Lys-tRNA-ligase_II_bac/euk"/>
</dbReference>
<dbReference type="InterPro" id="IPR044136">
    <property type="entry name" value="Lys-tRNA-ligase_II_N"/>
</dbReference>
<dbReference type="InterPro" id="IPR018149">
    <property type="entry name" value="Lys-tRNA-synth_II_C"/>
</dbReference>
<dbReference type="InterPro" id="IPR012340">
    <property type="entry name" value="NA-bd_OB-fold"/>
</dbReference>
<dbReference type="InterPro" id="IPR004365">
    <property type="entry name" value="NA-bd_OB_tRNA"/>
</dbReference>
<dbReference type="NCBIfam" id="TIGR00499">
    <property type="entry name" value="lysS_bact"/>
    <property type="match status" value="1"/>
</dbReference>
<dbReference type="NCBIfam" id="NF001756">
    <property type="entry name" value="PRK00484.1"/>
    <property type="match status" value="1"/>
</dbReference>
<dbReference type="PANTHER" id="PTHR42918:SF15">
    <property type="entry name" value="LYSINE--TRNA LIGASE, CHLOROPLASTIC_MITOCHONDRIAL"/>
    <property type="match status" value="1"/>
</dbReference>
<dbReference type="PANTHER" id="PTHR42918">
    <property type="entry name" value="LYSYL-TRNA SYNTHETASE"/>
    <property type="match status" value="1"/>
</dbReference>
<dbReference type="Pfam" id="PF00152">
    <property type="entry name" value="tRNA-synt_2"/>
    <property type="match status" value="1"/>
</dbReference>
<dbReference type="Pfam" id="PF01336">
    <property type="entry name" value="tRNA_anti-codon"/>
    <property type="match status" value="1"/>
</dbReference>
<dbReference type="PIRSF" id="PIRSF039101">
    <property type="entry name" value="LysRS2"/>
    <property type="match status" value="1"/>
</dbReference>
<dbReference type="PRINTS" id="PR00982">
    <property type="entry name" value="TRNASYNTHLYS"/>
</dbReference>
<dbReference type="SUPFAM" id="SSF55681">
    <property type="entry name" value="Class II aaRS and biotin synthetases"/>
    <property type="match status" value="1"/>
</dbReference>
<dbReference type="SUPFAM" id="SSF50249">
    <property type="entry name" value="Nucleic acid-binding proteins"/>
    <property type="match status" value="1"/>
</dbReference>
<dbReference type="PROSITE" id="PS50862">
    <property type="entry name" value="AA_TRNA_LIGASE_II"/>
    <property type="match status" value="1"/>
</dbReference>
<feature type="chain" id="PRO_0000152663" description="Lysine--tRNA ligase">
    <location>
        <begin position="1"/>
        <end position="504"/>
    </location>
</feature>
<feature type="binding site" evidence="1">
    <location>
        <position position="414"/>
    </location>
    <ligand>
        <name>Mg(2+)</name>
        <dbReference type="ChEBI" id="CHEBI:18420"/>
        <label>1</label>
    </ligand>
</feature>
<feature type="binding site" evidence="1">
    <location>
        <position position="421"/>
    </location>
    <ligand>
        <name>Mg(2+)</name>
        <dbReference type="ChEBI" id="CHEBI:18420"/>
        <label>1</label>
    </ligand>
</feature>
<feature type="binding site" evidence="1">
    <location>
        <position position="421"/>
    </location>
    <ligand>
        <name>Mg(2+)</name>
        <dbReference type="ChEBI" id="CHEBI:18420"/>
        <label>2</label>
    </ligand>
</feature>
<gene>
    <name evidence="1" type="primary">lysS</name>
    <name type="ordered locus">plu3548</name>
</gene>
<keyword id="KW-0030">Aminoacyl-tRNA synthetase</keyword>
<keyword id="KW-0067">ATP-binding</keyword>
<keyword id="KW-0963">Cytoplasm</keyword>
<keyword id="KW-0436">Ligase</keyword>
<keyword id="KW-0460">Magnesium</keyword>
<keyword id="KW-0479">Metal-binding</keyword>
<keyword id="KW-0547">Nucleotide-binding</keyword>
<keyword id="KW-0648">Protein biosynthesis</keyword>
<keyword id="KW-1185">Reference proteome</keyword>
<protein>
    <recommendedName>
        <fullName evidence="1">Lysine--tRNA ligase</fullName>
        <ecNumber evidence="1">6.1.1.6</ecNumber>
    </recommendedName>
    <alternativeName>
        <fullName evidence="1">Lysyl-tRNA synthetase</fullName>
        <shortName evidence="1">LysRS</shortName>
    </alternativeName>
</protein>
<reference key="1">
    <citation type="journal article" date="2003" name="Nat. Biotechnol.">
        <title>The genome sequence of the entomopathogenic bacterium Photorhabdus luminescens.</title>
        <authorList>
            <person name="Duchaud E."/>
            <person name="Rusniok C."/>
            <person name="Frangeul L."/>
            <person name="Buchrieser C."/>
            <person name="Givaudan A."/>
            <person name="Taourit S."/>
            <person name="Bocs S."/>
            <person name="Boursaux-Eude C."/>
            <person name="Chandler M."/>
            <person name="Charles J.-F."/>
            <person name="Dassa E."/>
            <person name="Derose R."/>
            <person name="Derzelle S."/>
            <person name="Freyssinet G."/>
            <person name="Gaudriault S."/>
            <person name="Medigue C."/>
            <person name="Lanois A."/>
            <person name="Powell K."/>
            <person name="Siguier P."/>
            <person name="Vincent R."/>
            <person name="Wingate V."/>
            <person name="Zouine M."/>
            <person name="Glaser P."/>
            <person name="Boemare N."/>
            <person name="Danchin A."/>
            <person name="Kunst F."/>
        </authorList>
    </citation>
    <scope>NUCLEOTIDE SEQUENCE [LARGE SCALE GENOMIC DNA]</scope>
    <source>
        <strain>DSM 15139 / CIP 105565 / TT01</strain>
    </source>
</reference>
<comment type="catalytic activity">
    <reaction evidence="1">
        <text>tRNA(Lys) + L-lysine + ATP = L-lysyl-tRNA(Lys) + AMP + diphosphate</text>
        <dbReference type="Rhea" id="RHEA:20792"/>
        <dbReference type="Rhea" id="RHEA-COMP:9696"/>
        <dbReference type="Rhea" id="RHEA-COMP:9697"/>
        <dbReference type="ChEBI" id="CHEBI:30616"/>
        <dbReference type="ChEBI" id="CHEBI:32551"/>
        <dbReference type="ChEBI" id="CHEBI:33019"/>
        <dbReference type="ChEBI" id="CHEBI:78442"/>
        <dbReference type="ChEBI" id="CHEBI:78529"/>
        <dbReference type="ChEBI" id="CHEBI:456215"/>
        <dbReference type="EC" id="6.1.1.6"/>
    </reaction>
</comment>
<comment type="cofactor">
    <cofactor evidence="1">
        <name>Mg(2+)</name>
        <dbReference type="ChEBI" id="CHEBI:18420"/>
    </cofactor>
    <text evidence="1">Binds 3 Mg(2+) ions per subunit.</text>
</comment>
<comment type="subunit">
    <text evidence="1">Homodimer.</text>
</comment>
<comment type="subcellular location">
    <subcellularLocation>
        <location evidence="1">Cytoplasm</location>
    </subcellularLocation>
</comment>
<comment type="similarity">
    <text evidence="1">Belongs to the class-II aminoacyl-tRNA synthetase family.</text>
</comment>
<proteinExistence type="inferred from homology"/>